<accession>P56331</accession>
<keyword id="KW-0396">Initiation factor</keyword>
<keyword id="KW-0648">Protein biosynthesis</keyword>
<reference key="1">
    <citation type="submission" date="1997-11" db="EMBL/GenBank/DDBJ databases">
        <authorList>
            <person name="Joseph R.G."/>
        </authorList>
    </citation>
    <scope>NUCLEOTIDE SEQUENCE [MRNA]</scope>
    <source>
        <tissue>Leaf</tissue>
    </source>
</reference>
<proteinExistence type="evidence at transcript level"/>
<feature type="initiator methionine" description="Removed" evidence="1">
    <location>
        <position position="1"/>
    </location>
</feature>
<feature type="chain" id="PRO_0000145110" description="Eukaryotic translation initiation factor 1A">
    <location>
        <begin position="2"/>
        <end position="145"/>
    </location>
</feature>
<feature type="domain" description="S1-like">
    <location>
        <begin position="22"/>
        <end position="96"/>
    </location>
</feature>
<feature type="region of interest" description="Disordered" evidence="2">
    <location>
        <begin position="1"/>
        <end position="25"/>
    </location>
</feature>
<feature type="compositionally biased region" description="Basic residues" evidence="2">
    <location>
        <begin position="1"/>
        <end position="15"/>
    </location>
</feature>
<feature type="compositionally biased region" description="Basic and acidic residues" evidence="2">
    <location>
        <begin position="16"/>
        <end position="25"/>
    </location>
</feature>
<sequence>MPKNKGKGGKNRKRGKNEADDDKRELVFKEDGQEYAQVLRMLGNGRCEAMCIDGTKRLCHIRGKMHKKVWIAAGDIILVGLRDYQDDKADVILKLMPDEARLLKAYGELPDNTRLNEGIGAGGLDEEMDTANDYIEFEDEDIDKI</sequence>
<name>IF1A_ONOVI</name>
<comment type="function">
    <text evidence="1">Seems to be required for maximal rate of protein biosynthesis. Enhances ribosome dissociation into subunits and stabilizes the binding of the initiator Met-tRNA(I) to 40 S ribosomal subunits (By similarity).</text>
</comment>
<comment type="similarity">
    <text evidence="3">Belongs to the eIF-1A family.</text>
</comment>
<dbReference type="EMBL" id="AF026804">
    <property type="protein sequence ID" value="AAB81996.1"/>
    <property type="molecule type" value="mRNA"/>
</dbReference>
<dbReference type="PIR" id="T08000">
    <property type="entry name" value="T08000"/>
</dbReference>
<dbReference type="SMR" id="P56331"/>
<dbReference type="GO" id="GO:0003723">
    <property type="term" value="F:RNA binding"/>
    <property type="evidence" value="ECO:0007669"/>
    <property type="project" value="InterPro"/>
</dbReference>
<dbReference type="GO" id="GO:0003743">
    <property type="term" value="F:translation initiation factor activity"/>
    <property type="evidence" value="ECO:0007669"/>
    <property type="project" value="UniProtKB-KW"/>
</dbReference>
<dbReference type="CDD" id="cd05793">
    <property type="entry name" value="S1_IF1A"/>
    <property type="match status" value="1"/>
</dbReference>
<dbReference type="FunFam" id="2.40.50.140:FF:000131">
    <property type="entry name" value="Eukaryotic translation initiation factor 1A"/>
    <property type="match status" value="1"/>
</dbReference>
<dbReference type="Gene3D" id="2.40.50.140">
    <property type="entry name" value="Nucleic acid-binding proteins"/>
    <property type="match status" value="1"/>
</dbReference>
<dbReference type="HAMAP" id="MF_00216">
    <property type="entry name" value="aIF_1A"/>
    <property type="match status" value="1"/>
</dbReference>
<dbReference type="InterPro" id="IPR012340">
    <property type="entry name" value="NA-bd_OB-fold"/>
</dbReference>
<dbReference type="InterPro" id="IPR006196">
    <property type="entry name" value="RNA-binding_domain_S1_IF1"/>
</dbReference>
<dbReference type="InterPro" id="IPR001253">
    <property type="entry name" value="TIF_eIF-1A"/>
</dbReference>
<dbReference type="InterPro" id="IPR018104">
    <property type="entry name" value="TIF_eIF-1A_CS"/>
</dbReference>
<dbReference type="NCBIfam" id="TIGR00523">
    <property type="entry name" value="eIF-1A"/>
    <property type="match status" value="1"/>
</dbReference>
<dbReference type="PANTHER" id="PTHR21668">
    <property type="entry name" value="EIF-1A"/>
    <property type="match status" value="1"/>
</dbReference>
<dbReference type="Pfam" id="PF01176">
    <property type="entry name" value="eIF-1a"/>
    <property type="match status" value="1"/>
</dbReference>
<dbReference type="SMART" id="SM00652">
    <property type="entry name" value="eIF1a"/>
    <property type="match status" value="1"/>
</dbReference>
<dbReference type="SUPFAM" id="SSF50249">
    <property type="entry name" value="Nucleic acid-binding proteins"/>
    <property type="match status" value="1"/>
</dbReference>
<dbReference type="PROSITE" id="PS01262">
    <property type="entry name" value="IF1A"/>
    <property type="match status" value="1"/>
</dbReference>
<dbReference type="PROSITE" id="PS50832">
    <property type="entry name" value="S1_IF1_TYPE"/>
    <property type="match status" value="1"/>
</dbReference>
<evidence type="ECO:0000250" key="1"/>
<evidence type="ECO:0000256" key="2">
    <source>
        <dbReference type="SAM" id="MobiDB-lite"/>
    </source>
</evidence>
<evidence type="ECO:0000305" key="3"/>
<organism>
    <name type="scientific">Onobrychis viciifolia</name>
    <name type="common">Common sainfoin</name>
    <dbReference type="NCBI Taxonomy" id="3882"/>
    <lineage>
        <taxon>Eukaryota</taxon>
        <taxon>Viridiplantae</taxon>
        <taxon>Streptophyta</taxon>
        <taxon>Embryophyta</taxon>
        <taxon>Tracheophyta</taxon>
        <taxon>Spermatophyta</taxon>
        <taxon>Magnoliopsida</taxon>
        <taxon>eudicotyledons</taxon>
        <taxon>Gunneridae</taxon>
        <taxon>Pentapetalae</taxon>
        <taxon>rosids</taxon>
        <taxon>fabids</taxon>
        <taxon>Fabales</taxon>
        <taxon>Fabaceae</taxon>
        <taxon>Papilionoideae</taxon>
        <taxon>50 kb inversion clade</taxon>
        <taxon>NPAAA clade</taxon>
        <taxon>Hologalegina</taxon>
        <taxon>IRL clade</taxon>
        <taxon>Hedysareae</taxon>
        <taxon>Onobrychis</taxon>
    </lineage>
</organism>
<protein>
    <recommendedName>
        <fullName>Eukaryotic translation initiation factor 1A</fullName>
        <shortName>eIF-1A</shortName>
    </recommendedName>
    <alternativeName>
        <fullName>Eukaryotic translation initiation factor 4C</fullName>
        <shortName>eIF-4C</shortName>
    </alternativeName>
</protein>